<accession>Q1RDB0</accession>
<feature type="signal peptide" evidence="1">
    <location>
        <begin position="1"/>
        <end position="28"/>
    </location>
</feature>
<feature type="chain" id="PRO_1000064560" description="Glucans biosynthesis protein G">
    <location>
        <begin position="29"/>
        <end position="517"/>
    </location>
</feature>
<reference key="1">
    <citation type="journal article" date="2006" name="Proc. Natl. Acad. Sci. U.S.A.">
        <title>Identification of genes subject to positive selection in uropathogenic strains of Escherichia coli: a comparative genomics approach.</title>
        <authorList>
            <person name="Chen S.L."/>
            <person name="Hung C.-S."/>
            <person name="Xu J."/>
            <person name="Reigstad C.S."/>
            <person name="Magrini V."/>
            <person name="Sabo A."/>
            <person name="Blasiar D."/>
            <person name="Bieri T."/>
            <person name="Meyer R.R."/>
            <person name="Ozersky P."/>
            <person name="Armstrong J.R."/>
            <person name="Fulton R.S."/>
            <person name="Latreille J.P."/>
            <person name="Spieth J."/>
            <person name="Hooton T.M."/>
            <person name="Mardis E.R."/>
            <person name="Hultgren S.J."/>
            <person name="Gordon J.I."/>
        </authorList>
    </citation>
    <scope>NUCLEOTIDE SEQUENCE [LARGE SCALE GENOMIC DNA]</scope>
    <source>
        <strain>UTI89 / UPEC</strain>
    </source>
</reference>
<evidence type="ECO:0000255" key="1">
    <source>
        <dbReference type="HAMAP-Rule" id="MF_01069"/>
    </source>
</evidence>
<comment type="function">
    <text evidence="1">Involved in the biosynthesis of osmoregulated periplasmic glucans (OPGs).</text>
</comment>
<comment type="pathway">
    <text evidence="1">Glycan metabolism; osmoregulated periplasmic glucan (OPG) biosynthesis.</text>
</comment>
<comment type="subcellular location">
    <subcellularLocation>
        <location evidence="1">Periplasm</location>
    </subcellularLocation>
</comment>
<comment type="similarity">
    <text evidence="1">Belongs to the OpgD/OpgG family.</text>
</comment>
<gene>
    <name evidence="1" type="primary">mdoG</name>
    <name evidence="1" type="synonym">opgG</name>
    <name type="ordered locus">UTI89_C1172</name>
</gene>
<name>OPGG_ECOUT</name>
<proteinExistence type="inferred from homology"/>
<organism>
    <name type="scientific">Escherichia coli (strain UTI89 / UPEC)</name>
    <dbReference type="NCBI Taxonomy" id="364106"/>
    <lineage>
        <taxon>Bacteria</taxon>
        <taxon>Pseudomonadati</taxon>
        <taxon>Pseudomonadota</taxon>
        <taxon>Gammaproteobacteria</taxon>
        <taxon>Enterobacterales</taxon>
        <taxon>Enterobacteriaceae</taxon>
        <taxon>Escherichia</taxon>
    </lineage>
</organism>
<keyword id="KW-0574">Periplasm</keyword>
<keyword id="KW-0732">Signal</keyword>
<dbReference type="EMBL" id="CP000243">
    <property type="protein sequence ID" value="ABE06654.1"/>
    <property type="molecule type" value="Genomic_DNA"/>
</dbReference>
<dbReference type="SMR" id="Q1RDB0"/>
<dbReference type="KEGG" id="eci:UTI89_C1172"/>
<dbReference type="HOGENOM" id="CLU_023403_2_0_6"/>
<dbReference type="UniPathway" id="UPA00637"/>
<dbReference type="Proteomes" id="UP000001952">
    <property type="component" value="Chromosome"/>
</dbReference>
<dbReference type="GO" id="GO:0030288">
    <property type="term" value="C:outer membrane-bounded periplasmic space"/>
    <property type="evidence" value="ECO:0007669"/>
    <property type="project" value="TreeGrafter"/>
</dbReference>
<dbReference type="GO" id="GO:0030246">
    <property type="term" value="F:carbohydrate binding"/>
    <property type="evidence" value="ECO:0007669"/>
    <property type="project" value="InterPro"/>
</dbReference>
<dbReference type="GO" id="GO:0003824">
    <property type="term" value="F:catalytic activity"/>
    <property type="evidence" value="ECO:0007669"/>
    <property type="project" value="InterPro"/>
</dbReference>
<dbReference type="GO" id="GO:0051274">
    <property type="term" value="P:beta-glucan biosynthetic process"/>
    <property type="evidence" value="ECO:0007669"/>
    <property type="project" value="TreeGrafter"/>
</dbReference>
<dbReference type="FunFam" id="2.60.40.10:FF:000294">
    <property type="entry name" value="Glucans biosynthesis protein G"/>
    <property type="match status" value="1"/>
</dbReference>
<dbReference type="FunFam" id="2.70.98.10:FF:000001">
    <property type="entry name" value="Glucans biosynthesis protein G"/>
    <property type="match status" value="1"/>
</dbReference>
<dbReference type="Gene3D" id="2.70.98.10">
    <property type="match status" value="1"/>
</dbReference>
<dbReference type="Gene3D" id="2.60.40.10">
    <property type="entry name" value="Immunoglobulins"/>
    <property type="match status" value="1"/>
</dbReference>
<dbReference type="HAMAP" id="MF_01069">
    <property type="entry name" value="MdoG_OpgG"/>
    <property type="match status" value="1"/>
</dbReference>
<dbReference type="InterPro" id="IPR011013">
    <property type="entry name" value="Gal_mutarotase_sf_dom"/>
</dbReference>
<dbReference type="InterPro" id="IPR014718">
    <property type="entry name" value="GH-type_carb-bd"/>
</dbReference>
<dbReference type="InterPro" id="IPR014438">
    <property type="entry name" value="Glucan_biosyn_MdoG/MdoD"/>
</dbReference>
<dbReference type="InterPro" id="IPR007444">
    <property type="entry name" value="Glucan_biosyn_MdoG_C"/>
</dbReference>
<dbReference type="InterPro" id="IPR013783">
    <property type="entry name" value="Ig-like_fold"/>
</dbReference>
<dbReference type="InterPro" id="IPR014756">
    <property type="entry name" value="Ig_E-set"/>
</dbReference>
<dbReference type="InterPro" id="IPR023704">
    <property type="entry name" value="MdoG_OpgG"/>
</dbReference>
<dbReference type="PANTHER" id="PTHR30504">
    <property type="entry name" value="GLUCANS BIOSYNTHESIS PROTEIN"/>
    <property type="match status" value="1"/>
</dbReference>
<dbReference type="PANTHER" id="PTHR30504:SF4">
    <property type="entry name" value="GLUCANS BIOSYNTHESIS PROTEIN G"/>
    <property type="match status" value="1"/>
</dbReference>
<dbReference type="Pfam" id="PF04349">
    <property type="entry name" value="MdoG"/>
    <property type="match status" value="1"/>
</dbReference>
<dbReference type="PIRSF" id="PIRSF006281">
    <property type="entry name" value="MdoG"/>
    <property type="match status" value="1"/>
</dbReference>
<dbReference type="SUPFAM" id="SSF81296">
    <property type="entry name" value="E set domains"/>
    <property type="match status" value="1"/>
</dbReference>
<dbReference type="SUPFAM" id="SSF74650">
    <property type="entry name" value="Galactose mutarotase-like"/>
    <property type="match status" value="1"/>
</dbReference>
<sequence length="517" mass="58648">MKHKLQMMKMRWLSAAVMLTLYTSSSWAFSIDDVAKQAQSLAGKGYEAPKSNLPSVFRDMKYADYQQIQFNHDKAYWNNLKTPFKLEFYHQGMYFDTPVKINEVTATAVKRIKYSPDYFTFGDVQHDKDTVKDLGFAGFKVLYPINSKDKNDEIVSMLGASYFRVIGAGQVYGLSARGLAIDTALPSGEEFPRFKEFWIERPKPTDKRLTIYALLDSPRATGAYKFVVMPGRDTVVDVQSKIYLRDKVGKLGVAPLTSMFLFGPNQPSPANNYRPELHDSNGLSIHAGNGEWIWRPLNNPKHLAVSSFSMENPQGFGLLQRGRDFSRFEDLDDRYDLRPSAWVTPKGEWGKGSVELVEIPTNDETNDNIVAYWTPDQLPEPGKEMNFKYTITFSRDEDKLHAPDNAWVQQTRRSTGDVKQSNLIRQPDGTIAFVVDFTGAEMKKLPEDTPVTAQTSIGDNGEIVESTVRYNPVTKGWRLVMRVKVKDAKKTTEMRAALVNADQTLSETWSYQLPANE</sequence>
<protein>
    <recommendedName>
        <fullName evidence="1">Glucans biosynthesis protein G</fullName>
    </recommendedName>
</protein>